<proteinExistence type="inferred from homology"/>
<name>RPOB_ALLAM</name>
<accession>B9JVM8</accession>
<dbReference type="EC" id="2.7.7.6" evidence="1"/>
<dbReference type="EMBL" id="CP000633">
    <property type="protein sequence ID" value="ACM36308.1"/>
    <property type="molecule type" value="Genomic_DNA"/>
</dbReference>
<dbReference type="RefSeq" id="WP_015915731.1">
    <property type="nucleotide sequence ID" value="NC_011989.1"/>
</dbReference>
<dbReference type="SMR" id="B9JVM8"/>
<dbReference type="STRING" id="311402.Avi_1826"/>
<dbReference type="KEGG" id="avi:Avi_1826"/>
<dbReference type="eggNOG" id="COG0085">
    <property type="taxonomic scope" value="Bacteria"/>
</dbReference>
<dbReference type="HOGENOM" id="CLU_000524_4_0_5"/>
<dbReference type="Proteomes" id="UP000001596">
    <property type="component" value="Chromosome 1"/>
</dbReference>
<dbReference type="GO" id="GO:0000428">
    <property type="term" value="C:DNA-directed RNA polymerase complex"/>
    <property type="evidence" value="ECO:0007669"/>
    <property type="project" value="UniProtKB-KW"/>
</dbReference>
<dbReference type="GO" id="GO:0003677">
    <property type="term" value="F:DNA binding"/>
    <property type="evidence" value="ECO:0007669"/>
    <property type="project" value="UniProtKB-UniRule"/>
</dbReference>
<dbReference type="GO" id="GO:0003899">
    <property type="term" value="F:DNA-directed RNA polymerase activity"/>
    <property type="evidence" value="ECO:0007669"/>
    <property type="project" value="UniProtKB-UniRule"/>
</dbReference>
<dbReference type="GO" id="GO:0032549">
    <property type="term" value="F:ribonucleoside binding"/>
    <property type="evidence" value="ECO:0007669"/>
    <property type="project" value="InterPro"/>
</dbReference>
<dbReference type="GO" id="GO:0006351">
    <property type="term" value="P:DNA-templated transcription"/>
    <property type="evidence" value="ECO:0007669"/>
    <property type="project" value="UniProtKB-UniRule"/>
</dbReference>
<dbReference type="CDD" id="cd00653">
    <property type="entry name" value="RNA_pol_B_RPB2"/>
    <property type="match status" value="1"/>
</dbReference>
<dbReference type="FunFam" id="2.40.50.100:FF:000006">
    <property type="entry name" value="DNA-directed RNA polymerase subunit beta"/>
    <property type="match status" value="1"/>
</dbReference>
<dbReference type="FunFam" id="3.90.1800.10:FF:000001">
    <property type="entry name" value="DNA-directed RNA polymerase subunit beta"/>
    <property type="match status" value="1"/>
</dbReference>
<dbReference type="Gene3D" id="2.40.50.100">
    <property type="match status" value="1"/>
</dbReference>
<dbReference type="Gene3D" id="2.40.50.150">
    <property type="match status" value="1"/>
</dbReference>
<dbReference type="Gene3D" id="3.90.1100.10">
    <property type="match status" value="2"/>
</dbReference>
<dbReference type="Gene3D" id="2.30.150.10">
    <property type="entry name" value="DNA-directed RNA polymerase, beta subunit, external 1 domain"/>
    <property type="match status" value="1"/>
</dbReference>
<dbReference type="Gene3D" id="2.40.270.10">
    <property type="entry name" value="DNA-directed RNA polymerase, subunit 2, domain 6"/>
    <property type="match status" value="1"/>
</dbReference>
<dbReference type="Gene3D" id="3.90.1800.10">
    <property type="entry name" value="RNA polymerase alpha subunit dimerisation domain"/>
    <property type="match status" value="1"/>
</dbReference>
<dbReference type="Gene3D" id="3.90.1110.10">
    <property type="entry name" value="RNA polymerase Rpb2, domain 2"/>
    <property type="match status" value="1"/>
</dbReference>
<dbReference type="HAMAP" id="MF_01321">
    <property type="entry name" value="RNApol_bact_RpoB"/>
    <property type="match status" value="1"/>
</dbReference>
<dbReference type="InterPro" id="IPR042107">
    <property type="entry name" value="DNA-dir_RNA_pol_bsu_ext_1_sf"/>
</dbReference>
<dbReference type="InterPro" id="IPR019462">
    <property type="entry name" value="DNA-dir_RNA_pol_bsu_external_1"/>
</dbReference>
<dbReference type="InterPro" id="IPR015712">
    <property type="entry name" value="DNA-dir_RNA_pol_su2"/>
</dbReference>
<dbReference type="InterPro" id="IPR007120">
    <property type="entry name" value="DNA-dir_RNAP_su2_dom"/>
</dbReference>
<dbReference type="InterPro" id="IPR037033">
    <property type="entry name" value="DNA-dir_RNAP_su2_hyb_sf"/>
</dbReference>
<dbReference type="InterPro" id="IPR010243">
    <property type="entry name" value="RNA_pol_bsu_bac"/>
</dbReference>
<dbReference type="InterPro" id="IPR007121">
    <property type="entry name" value="RNA_pol_bsu_CS"/>
</dbReference>
<dbReference type="InterPro" id="IPR007644">
    <property type="entry name" value="RNA_pol_bsu_protrusion"/>
</dbReference>
<dbReference type="InterPro" id="IPR007642">
    <property type="entry name" value="RNA_pol_Rpb2_2"/>
</dbReference>
<dbReference type="InterPro" id="IPR037034">
    <property type="entry name" value="RNA_pol_Rpb2_2_sf"/>
</dbReference>
<dbReference type="InterPro" id="IPR007645">
    <property type="entry name" value="RNA_pol_Rpb2_3"/>
</dbReference>
<dbReference type="InterPro" id="IPR007641">
    <property type="entry name" value="RNA_pol_Rpb2_7"/>
</dbReference>
<dbReference type="InterPro" id="IPR014724">
    <property type="entry name" value="RNA_pol_RPB2_OB-fold"/>
</dbReference>
<dbReference type="NCBIfam" id="NF001616">
    <property type="entry name" value="PRK00405.1"/>
    <property type="match status" value="1"/>
</dbReference>
<dbReference type="NCBIfam" id="TIGR02013">
    <property type="entry name" value="rpoB"/>
    <property type="match status" value="1"/>
</dbReference>
<dbReference type="PANTHER" id="PTHR20856">
    <property type="entry name" value="DNA-DIRECTED RNA POLYMERASE I SUBUNIT 2"/>
    <property type="match status" value="1"/>
</dbReference>
<dbReference type="Pfam" id="PF04563">
    <property type="entry name" value="RNA_pol_Rpb2_1"/>
    <property type="match status" value="1"/>
</dbReference>
<dbReference type="Pfam" id="PF04561">
    <property type="entry name" value="RNA_pol_Rpb2_2"/>
    <property type="match status" value="2"/>
</dbReference>
<dbReference type="Pfam" id="PF04565">
    <property type="entry name" value="RNA_pol_Rpb2_3"/>
    <property type="match status" value="1"/>
</dbReference>
<dbReference type="Pfam" id="PF10385">
    <property type="entry name" value="RNA_pol_Rpb2_45"/>
    <property type="match status" value="1"/>
</dbReference>
<dbReference type="Pfam" id="PF00562">
    <property type="entry name" value="RNA_pol_Rpb2_6"/>
    <property type="match status" value="1"/>
</dbReference>
<dbReference type="Pfam" id="PF04560">
    <property type="entry name" value="RNA_pol_Rpb2_7"/>
    <property type="match status" value="1"/>
</dbReference>
<dbReference type="SUPFAM" id="SSF64484">
    <property type="entry name" value="beta and beta-prime subunits of DNA dependent RNA-polymerase"/>
    <property type="match status" value="1"/>
</dbReference>
<dbReference type="PROSITE" id="PS01166">
    <property type="entry name" value="RNA_POL_BETA"/>
    <property type="match status" value="1"/>
</dbReference>
<reference key="1">
    <citation type="journal article" date="2009" name="J. Bacteriol.">
        <title>Genome sequences of three Agrobacterium biovars help elucidate the evolution of multichromosome genomes in bacteria.</title>
        <authorList>
            <person name="Slater S.C."/>
            <person name="Goldman B.S."/>
            <person name="Goodner B."/>
            <person name="Setubal J.C."/>
            <person name="Farrand S.K."/>
            <person name="Nester E.W."/>
            <person name="Burr T.J."/>
            <person name="Banta L."/>
            <person name="Dickerman A.W."/>
            <person name="Paulsen I."/>
            <person name="Otten L."/>
            <person name="Suen G."/>
            <person name="Welch R."/>
            <person name="Almeida N.F."/>
            <person name="Arnold F."/>
            <person name="Burton O.T."/>
            <person name="Du Z."/>
            <person name="Ewing A."/>
            <person name="Godsy E."/>
            <person name="Heisel S."/>
            <person name="Houmiel K.L."/>
            <person name="Jhaveri J."/>
            <person name="Lu J."/>
            <person name="Miller N.M."/>
            <person name="Norton S."/>
            <person name="Chen Q."/>
            <person name="Phoolcharoen W."/>
            <person name="Ohlin V."/>
            <person name="Ondrusek D."/>
            <person name="Pride N."/>
            <person name="Stricklin S.L."/>
            <person name="Sun J."/>
            <person name="Wheeler C."/>
            <person name="Wilson L."/>
            <person name="Zhu H."/>
            <person name="Wood D.W."/>
        </authorList>
    </citation>
    <scope>NUCLEOTIDE SEQUENCE [LARGE SCALE GENOMIC DNA]</scope>
    <source>
        <strain>ATCC BAA-846 / DSM 112012 / S4</strain>
    </source>
</reference>
<sequence>MAQTLSFNGRRRVRKFFGKIPEVAEMPNLIEVQKASYDQFLMVDEPEGGRPDEGLQTVFKSVFPITDFSGASMLEFVSYEFEPPKFDVDECRQRDLTYAAPLKVTLRLIVFDIDEDTGARSIKDIKEQSVYMGDMPLMTNNGTFIVNGTERVIVSQMHRSPGVFFDHDKGKSHSSGKLLFAARVIPYRGSWLDIEFDAKDIVHARIDRRRKIPVTSLLMALGMDGEEILSTFYSKSDYKRDGKGWRVPFQAETLKGSKTLVDMVDADSGEVVVEAGKKLTPRLLRQLQDKGLKALKATDEDLYGNYLAEDIVNFATGEIYLEAGDEIDEKTLPIILDAGFEEIPVLGIDHINVGAYIRNTLAADKNENRQDALFDIYRVMRPGEPPTMDSAEAMFNSLFFDSERYDLSAVGRVKMNMRLDLEVADTVRVLRKEDILAVVKMLVELRDGKGEIDDIDNLGNRRVRSVGELMENQYRLGLLRMERAIKERMSSIEIDTVMPQDLINAKPAAAAVREFFGSSQLSQFMDQVNPLSEITHKRRLSALGPGGLTRERAGFEVRDVHPTHYGRICPIETPEGPNIGLINSLATFARVNKYGFIESPYRKIIDGVVTKDVIYLSAMEEAKYYVAQANAELNAEGKFVEEFVVCRHAGEVMLSPRDTINLMDVSPKQLVSVAAALIPFLENDDANRALMGSNMQRQAVPLLRAEAPFVGTGMEPIVARDSGAAIGARRGGVVDQVDATRIVIRATEDLDAGKSGVDIYRLQKFQRSNQNTCVNQRPLVAVGDILNKGDIIADGPSTDLGDLALGRNALVAFMPWNGYNYEDSILMSERIVSEDVFTSIHIEEFEVMARDTKLGPEEITRDIPNVSEEALRNLDEAGIVYIGAEVQPGDILVGKITPKGESPMTPEEKLLRAIFGEKASDVRDTSMRMPPGTFGTIVEVRVFNRHGVEKDERAMAIEREEIERLAKDRDDEQAILDRNVYGRLLDTLRGQVSIAGPKGFKKGVELNNAVISEYPRSQWWMFAVEDEKVQSELEALRGQYDESKSRLEQRFMDKVEKVQRGDEMPPGVMKMVKVFVAVKRKIQPGDKMAGRHGNKGVVSRIVPVEDMPFLEDGTHVDIVLNPLGVPSRMNVGQILETHLAWACAGMGRKIGQMLEDYQKHLDITELRTELVDLYASESHDEVARFDDESLLRLADQAKSGLSIATPVFDGAHESDVSEMLTRAGLHTSGQSVLYDGRTGETFDRKVTVGYMYMIKLNHLVDDKIHARSIGPYSLVTQQPLGGKAQFGGQRFGEMEVWALEAYGAAYTLQEMLTVKSDDVAGRTKVYEAIVRGDDTFEAGIPESFNVLVKEMRSLGLSVELENSKLETADTVNPLPDAAE</sequence>
<organism>
    <name type="scientific">Allorhizobium ampelinum (strain ATCC BAA-846 / DSM 112012 / S4)</name>
    <name type="common">Agrobacterium vitis (strain S4)</name>
    <dbReference type="NCBI Taxonomy" id="311402"/>
    <lineage>
        <taxon>Bacteria</taxon>
        <taxon>Pseudomonadati</taxon>
        <taxon>Pseudomonadota</taxon>
        <taxon>Alphaproteobacteria</taxon>
        <taxon>Hyphomicrobiales</taxon>
        <taxon>Rhizobiaceae</taxon>
        <taxon>Rhizobium/Agrobacterium group</taxon>
        <taxon>Allorhizobium</taxon>
        <taxon>Allorhizobium ampelinum</taxon>
    </lineage>
</organism>
<keyword id="KW-0240">DNA-directed RNA polymerase</keyword>
<keyword id="KW-0548">Nucleotidyltransferase</keyword>
<keyword id="KW-1185">Reference proteome</keyword>
<keyword id="KW-0804">Transcription</keyword>
<keyword id="KW-0808">Transferase</keyword>
<evidence type="ECO:0000255" key="1">
    <source>
        <dbReference type="HAMAP-Rule" id="MF_01321"/>
    </source>
</evidence>
<protein>
    <recommendedName>
        <fullName evidence="1">DNA-directed RNA polymerase subunit beta</fullName>
        <shortName evidence="1">RNAP subunit beta</shortName>
        <ecNumber evidence="1">2.7.7.6</ecNumber>
    </recommendedName>
    <alternativeName>
        <fullName evidence="1">RNA polymerase subunit beta</fullName>
    </alternativeName>
    <alternativeName>
        <fullName evidence="1">Transcriptase subunit beta</fullName>
    </alternativeName>
</protein>
<gene>
    <name evidence="1" type="primary">rpoB</name>
    <name type="ordered locus">Avi_1826</name>
</gene>
<feature type="chain" id="PRO_1000165783" description="DNA-directed RNA polymerase subunit beta">
    <location>
        <begin position="1"/>
        <end position="1379"/>
    </location>
</feature>
<comment type="function">
    <text evidence="1">DNA-dependent RNA polymerase catalyzes the transcription of DNA into RNA using the four ribonucleoside triphosphates as substrates.</text>
</comment>
<comment type="catalytic activity">
    <reaction evidence="1">
        <text>RNA(n) + a ribonucleoside 5'-triphosphate = RNA(n+1) + diphosphate</text>
        <dbReference type="Rhea" id="RHEA:21248"/>
        <dbReference type="Rhea" id="RHEA-COMP:14527"/>
        <dbReference type="Rhea" id="RHEA-COMP:17342"/>
        <dbReference type="ChEBI" id="CHEBI:33019"/>
        <dbReference type="ChEBI" id="CHEBI:61557"/>
        <dbReference type="ChEBI" id="CHEBI:140395"/>
        <dbReference type="EC" id="2.7.7.6"/>
    </reaction>
</comment>
<comment type="subunit">
    <text evidence="1">The RNAP catalytic core consists of 2 alpha, 1 beta, 1 beta' and 1 omega subunit. When a sigma factor is associated with the core the holoenzyme is formed, which can initiate transcription.</text>
</comment>
<comment type="similarity">
    <text evidence="1">Belongs to the RNA polymerase beta chain family.</text>
</comment>